<organism>
    <name type="scientific">Escherichia coli O1:K1 / APEC</name>
    <dbReference type="NCBI Taxonomy" id="405955"/>
    <lineage>
        <taxon>Bacteria</taxon>
        <taxon>Pseudomonadati</taxon>
        <taxon>Pseudomonadota</taxon>
        <taxon>Gammaproteobacteria</taxon>
        <taxon>Enterobacterales</taxon>
        <taxon>Enterobacteriaceae</taxon>
        <taxon>Escherichia</taxon>
    </lineage>
</organism>
<comment type="function">
    <text evidence="1">Translocates 4-amino-4-deoxy-L-arabinose-phosphoundecaprenol (alpha-L-Ara4N-phosphoundecaprenol) from the cytoplasmic to the periplasmic side of the inner membrane.</text>
</comment>
<comment type="pathway">
    <text evidence="1">Bacterial outer membrane biogenesis; lipopolysaccharide biosynthesis.</text>
</comment>
<comment type="subunit">
    <text evidence="1">Heterodimer of ArnE and ArnF.</text>
</comment>
<comment type="subcellular location">
    <subcellularLocation>
        <location evidence="1">Cell inner membrane</location>
        <topology evidence="1">Multi-pass membrane protein</topology>
    </subcellularLocation>
</comment>
<comment type="similarity">
    <text evidence="1">Belongs to the ArnF family.</text>
</comment>
<comment type="sequence caution" evidence="2">
    <conflict type="erroneous initiation">
        <sequence resource="EMBL-CDS" id="ABJ01650"/>
    </conflict>
</comment>
<proteinExistence type="inferred from homology"/>
<name>ARNF_ECOK1</name>
<sequence>MGLMWGLFSVIIASAAQLSMGFAASHLPPMTHLWDFIAALLAFGLDARILLLGLLGYLLSVFCWYKTLHKLALSKAYALLSMSYVLVWIASMVLPGWEGTFSLKALLGVACIMSGLMLIFLPTTKQRY</sequence>
<keyword id="KW-0997">Cell inner membrane</keyword>
<keyword id="KW-1003">Cell membrane</keyword>
<keyword id="KW-0441">Lipid A biosynthesis</keyword>
<keyword id="KW-0444">Lipid biosynthesis</keyword>
<keyword id="KW-0443">Lipid metabolism</keyword>
<keyword id="KW-0448">Lipopolysaccharide biosynthesis</keyword>
<keyword id="KW-0472">Membrane</keyword>
<keyword id="KW-1185">Reference proteome</keyword>
<keyword id="KW-0812">Transmembrane</keyword>
<keyword id="KW-1133">Transmembrane helix</keyword>
<keyword id="KW-0813">Transport</keyword>
<feature type="chain" id="PRO_0000382001" description="Probable 4-amino-4-deoxy-L-arabinose-phosphoundecaprenol flippase subunit ArnF">
    <location>
        <begin position="1"/>
        <end position="128"/>
    </location>
</feature>
<feature type="topological domain" description="Cytoplasmic" evidence="1">
    <location>
        <begin position="1"/>
        <end position="2"/>
    </location>
</feature>
<feature type="transmembrane region" description="Helical" evidence="1">
    <location>
        <begin position="3"/>
        <end position="23"/>
    </location>
</feature>
<feature type="topological domain" description="Periplasmic" evidence="1">
    <location>
        <begin position="24"/>
        <end position="35"/>
    </location>
</feature>
<feature type="transmembrane region" description="Helical" evidence="1">
    <location>
        <begin position="36"/>
        <end position="56"/>
    </location>
</feature>
<feature type="topological domain" description="Cytoplasmic" evidence="1">
    <location>
        <begin position="57"/>
        <end position="76"/>
    </location>
</feature>
<feature type="transmembrane region" description="Helical" evidence="1">
    <location>
        <begin position="77"/>
        <end position="97"/>
    </location>
</feature>
<feature type="topological domain" description="Periplasmic" evidence="1">
    <location>
        <begin position="98"/>
        <end position="100"/>
    </location>
</feature>
<feature type="transmembrane region" description="Helical" evidence="1">
    <location>
        <begin position="101"/>
        <end position="121"/>
    </location>
</feature>
<feature type="topological domain" description="Cytoplasmic" evidence="1">
    <location>
        <begin position="122"/>
        <end position="128"/>
    </location>
</feature>
<gene>
    <name evidence="1" type="primary">arnF</name>
    <name type="ordered locus">Ecok1_21560</name>
    <name type="ORF">APECO1_4303</name>
</gene>
<reference key="1">
    <citation type="journal article" date="2007" name="J. Bacteriol.">
        <title>The genome sequence of avian pathogenic Escherichia coli strain O1:K1:H7 shares strong similarities with human extraintestinal pathogenic E. coli genomes.</title>
        <authorList>
            <person name="Johnson T.J."/>
            <person name="Kariyawasam S."/>
            <person name="Wannemuehler Y."/>
            <person name="Mangiamele P."/>
            <person name="Johnson S.J."/>
            <person name="Doetkott C."/>
            <person name="Skyberg J.A."/>
            <person name="Lynne A.M."/>
            <person name="Johnson J.R."/>
            <person name="Nolan L.K."/>
        </authorList>
    </citation>
    <scope>NUCLEOTIDE SEQUENCE [LARGE SCALE GENOMIC DNA]</scope>
</reference>
<protein>
    <recommendedName>
        <fullName evidence="1">Probable 4-amino-4-deoxy-L-arabinose-phosphoundecaprenol flippase subunit ArnF</fullName>
        <shortName evidence="1">L-Ara4N-phosphoundecaprenol flippase subunit ArnF</shortName>
    </recommendedName>
    <alternativeName>
        <fullName evidence="1">Undecaprenyl phosphate-aminoarabinose flippase subunit ArnF</fullName>
    </alternativeName>
</protein>
<dbReference type="EMBL" id="CP000468">
    <property type="protein sequence ID" value="ABJ01650.1"/>
    <property type="status" value="ALT_INIT"/>
    <property type="molecule type" value="Genomic_DNA"/>
</dbReference>
<dbReference type="RefSeq" id="WP_000523876.1">
    <property type="nucleotide sequence ID" value="NZ_CADILS010000004.1"/>
</dbReference>
<dbReference type="KEGG" id="ecv:APECO1_4303"/>
<dbReference type="HOGENOM" id="CLU_1243704_0_0_6"/>
<dbReference type="UniPathway" id="UPA00030"/>
<dbReference type="Proteomes" id="UP000008216">
    <property type="component" value="Chromosome"/>
</dbReference>
<dbReference type="GO" id="GO:0005886">
    <property type="term" value="C:plasma membrane"/>
    <property type="evidence" value="ECO:0007669"/>
    <property type="project" value="UniProtKB-SubCell"/>
</dbReference>
<dbReference type="GO" id="GO:1901505">
    <property type="term" value="F:carbohydrate derivative transmembrane transporter activity"/>
    <property type="evidence" value="ECO:0007669"/>
    <property type="project" value="InterPro"/>
</dbReference>
<dbReference type="GO" id="GO:0009245">
    <property type="term" value="P:lipid A biosynthetic process"/>
    <property type="evidence" value="ECO:0007669"/>
    <property type="project" value="UniProtKB-UniRule"/>
</dbReference>
<dbReference type="GO" id="GO:0009103">
    <property type="term" value="P:lipopolysaccharide biosynthetic process"/>
    <property type="evidence" value="ECO:0007669"/>
    <property type="project" value="UniProtKB-UniRule"/>
</dbReference>
<dbReference type="FunFam" id="1.10.3730.20:FF:000003">
    <property type="entry name" value="Probable 4-amino-4-deoxy-L-arabinose-phosphoundecaprenol flippase subunit ArnF"/>
    <property type="match status" value="1"/>
</dbReference>
<dbReference type="Gene3D" id="1.10.3730.20">
    <property type="match status" value="1"/>
</dbReference>
<dbReference type="HAMAP" id="MF_00538">
    <property type="entry name" value="Flippase_ArnF"/>
    <property type="match status" value="1"/>
</dbReference>
<dbReference type="InterPro" id="IPR022832">
    <property type="entry name" value="Flippase_ArnF"/>
</dbReference>
<dbReference type="InterPro" id="IPR000390">
    <property type="entry name" value="Small_drug/metabolite_transptr"/>
</dbReference>
<dbReference type="NCBIfam" id="NF002816">
    <property type="entry name" value="PRK02971.1-2"/>
    <property type="match status" value="1"/>
</dbReference>
<dbReference type="PANTHER" id="PTHR30561:SF9">
    <property type="entry name" value="4-AMINO-4-DEOXY-L-ARABINOSE-PHOSPHOUNDECAPRENOL FLIPPASE SUBUNIT ARNF-RELATED"/>
    <property type="match status" value="1"/>
</dbReference>
<dbReference type="PANTHER" id="PTHR30561">
    <property type="entry name" value="SMR FAMILY PROTON-DEPENDENT DRUG EFFLUX TRANSPORTER SUGE"/>
    <property type="match status" value="1"/>
</dbReference>
<dbReference type="SUPFAM" id="SSF103481">
    <property type="entry name" value="Multidrug resistance efflux transporter EmrE"/>
    <property type="match status" value="1"/>
</dbReference>
<accession>A1ADB0</accession>
<evidence type="ECO:0000255" key="1">
    <source>
        <dbReference type="HAMAP-Rule" id="MF_00538"/>
    </source>
</evidence>
<evidence type="ECO:0000305" key="2"/>